<reference key="1">
    <citation type="submission" date="2006-12" db="EMBL/GenBank/DDBJ databases">
        <authorList>
            <person name="Hendrix L."/>
            <person name="Mohamoud Y."/>
            <person name="Radune D."/>
            <person name="Shvartsbeyn A."/>
            <person name="Daugherty S."/>
            <person name="Dodson R."/>
            <person name="Durkin A.S."/>
            <person name="Harkins D."/>
            <person name="Huot H."/>
            <person name="Kothari S.P."/>
            <person name="Madupu R."/>
            <person name="Li J."/>
            <person name="Nelson W.C."/>
            <person name="Shrivastava S."/>
            <person name="Giglio M.G."/>
            <person name="Haft D."/>
            <person name="Selengut J."/>
            <person name="Fraser-Ligget C."/>
            <person name="Seshadri R."/>
        </authorList>
    </citation>
    <scope>NUCLEOTIDE SEQUENCE [LARGE SCALE GENOMIC DNA]</scope>
    <source>
        <strain>ATCC 35685 / KC583 / Herrer 020/F12,63</strain>
    </source>
</reference>
<proteinExistence type="inferred from homology"/>
<protein>
    <recommendedName>
        <fullName evidence="1">Lipoyl synthase</fullName>
        <ecNumber evidence="1">2.8.1.8</ecNumber>
    </recommendedName>
    <alternativeName>
        <fullName evidence="1">Lip-syn</fullName>
        <shortName evidence="1">LS</shortName>
    </alternativeName>
    <alternativeName>
        <fullName evidence="1">Lipoate synthase</fullName>
    </alternativeName>
    <alternativeName>
        <fullName evidence="1">Lipoic acid synthase</fullName>
    </alternativeName>
    <alternativeName>
        <fullName evidence="1">Sulfur insertion protein LipA</fullName>
    </alternativeName>
</protein>
<comment type="function">
    <text evidence="1">Catalyzes the radical-mediated insertion of two sulfur atoms into the C-6 and C-8 positions of the octanoyl moiety bound to the lipoyl domains of lipoate-dependent enzymes, thereby converting the octanoylated domains into lipoylated derivatives.</text>
</comment>
<comment type="catalytic activity">
    <reaction evidence="1">
        <text>[[Fe-S] cluster scaffold protein carrying a second [4Fe-4S](2+) cluster] + N(6)-octanoyl-L-lysyl-[protein] + 2 oxidized [2Fe-2S]-[ferredoxin] + 2 S-adenosyl-L-methionine + 4 H(+) = [[Fe-S] cluster scaffold protein] + N(6)-[(R)-dihydrolipoyl]-L-lysyl-[protein] + 4 Fe(3+) + 2 hydrogen sulfide + 2 5'-deoxyadenosine + 2 L-methionine + 2 reduced [2Fe-2S]-[ferredoxin]</text>
        <dbReference type="Rhea" id="RHEA:16585"/>
        <dbReference type="Rhea" id="RHEA-COMP:9928"/>
        <dbReference type="Rhea" id="RHEA-COMP:10000"/>
        <dbReference type="Rhea" id="RHEA-COMP:10001"/>
        <dbReference type="Rhea" id="RHEA-COMP:10475"/>
        <dbReference type="Rhea" id="RHEA-COMP:14568"/>
        <dbReference type="Rhea" id="RHEA-COMP:14569"/>
        <dbReference type="ChEBI" id="CHEBI:15378"/>
        <dbReference type="ChEBI" id="CHEBI:17319"/>
        <dbReference type="ChEBI" id="CHEBI:29034"/>
        <dbReference type="ChEBI" id="CHEBI:29919"/>
        <dbReference type="ChEBI" id="CHEBI:33722"/>
        <dbReference type="ChEBI" id="CHEBI:33737"/>
        <dbReference type="ChEBI" id="CHEBI:33738"/>
        <dbReference type="ChEBI" id="CHEBI:57844"/>
        <dbReference type="ChEBI" id="CHEBI:59789"/>
        <dbReference type="ChEBI" id="CHEBI:78809"/>
        <dbReference type="ChEBI" id="CHEBI:83100"/>
        <dbReference type="EC" id="2.8.1.8"/>
    </reaction>
</comment>
<comment type="cofactor">
    <cofactor evidence="1">
        <name>[4Fe-4S] cluster</name>
        <dbReference type="ChEBI" id="CHEBI:49883"/>
    </cofactor>
    <text evidence="1">Binds 2 [4Fe-4S] clusters per subunit. One cluster is coordinated with 3 cysteines and an exchangeable S-adenosyl-L-methionine.</text>
</comment>
<comment type="pathway">
    <text evidence="1">Protein modification; protein lipoylation via endogenous pathway; protein N(6)-(lipoyl)lysine from octanoyl-[acyl-carrier-protein]: step 2/2.</text>
</comment>
<comment type="subcellular location">
    <subcellularLocation>
        <location evidence="1">Cytoplasm</location>
    </subcellularLocation>
</comment>
<comment type="similarity">
    <text evidence="1">Belongs to the radical SAM superfamily. Lipoyl synthase family.</text>
</comment>
<feature type="chain" id="PRO_1000012188" description="Lipoyl synthase">
    <location>
        <begin position="1"/>
        <end position="317"/>
    </location>
</feature>
<feature type="domain" description="Radical SAM core" evidence="2">
    <location>
        <begin position="71"/>
        <end position="287"/>
    </location>
</feature>
<feature type="binding site" evidence="1">
    <location>
        <position position="59"/>
    </location>
    <ligand>
        <name>[4Fe-4S] cluster</name>
        <dbReference type="ChEBI" id="CHEBI:49883"/>
        <label>1</label>
    </ligand>
</feature>
<feature type="binding site" evidence="1">
    <location>
        <position position="64"/>
    </location>
    <ligand>
        <name>[4Fe-4S] cluster</name>
        <dbReference type="ChEBI" id="CHEBI:49883"/>
        <label>1</label>
    </ligand>
</feature>
<feature type="binding site" evidence="1">
    <location>
        <position position="70"/>
    </location>
    <ligand>
        <name>[4Fe-4S] cluster</name>
        <dbReference type="ChEBI" id="CHEBI:49883"/>
        <label>1</label>
    </ligand>
</feature>
<feature type="binding site" evidence="1">
    <location>
        <position position="85"/>
    </location>
    <ligand>
        <name>[4Fe-4S] cluster</name>
        <dbReference type="ChEBI" id="CHEBI:49883"/>
        <label>2</label>
        <note>4Fe-4S-S-AdoMet</note>
    </ligand>
</feature>
<feature type="binding site" evidence="1">
    <location>
        <position position="89"/>
    </location>
    <ligand>
        <name>[4Fe-4S] cluster</name>
        <dbReference type="ChEBI" id="CHEBI:49883"/>
        <label>2</label>
        <note>4Fe-4S-S-AdoMet</note>
    </ligand>
</feature>
<feature type="binding site" evidence="1">
    <location>
        <position position="92"/>
    </location>
    <ligand>
        <name>[4Fe-4S] cluster</name>
        <dbReference type="ChEBI" id="CHEBI:49883"/>
        <label>2</label>
        <note>4Fe-4S-S-AdoMet</note>
    </ligand>
</feature>
<feature type="binding site" evidence="1">
    <location>
        <position position="298"/>
    </location>
    <ligand>
        <name>[4Fe-4S] cluster</name>
        <dbReference type="ChEBI" id="CHEBI:49883"/>
        <label>1</label>
    </ligand>
</feature>
<sequence length="317" mass="35617">MVTVVDKVTSMRVRHPEKAHRPDTSIQKKPDWIRVKAPTSQVYKETHGIVRANKLVTVCEEAGCPNVGECWSQRHASFMILGEICTRACAFCNVATGIPLAVDDDEPERVADAVAQMGLKHVVITSVDRDDLADGGAQHFAKVIYAIRRKSLGTTIEVLTPDFRHKDHALEIVVAAKPDVFNHNLETVPSKYLKVRPGARYFHSIRLLQRVKEIDPMIFTKSGIMVGFGEERNEILQLMDDLRSADVDFMTIGQYLQPTRKHHPVIRFLPPDEFESFAKIGKAKGFLHMASSPLTRSSHHAGDDFEILKKARAQKFS</sequence>
<organism>
    <name type="scientific">Bartonella bacilliformis (strain ATCC 35685 / KC583 / Herrer 020/F12,63)</name>
    <dbReference type="NCBI Taxonomy" id="360095"/>
    <lineage>
        <taxon>Bacteria</taxon>
        <taxon>Pseudomonadati</taxon>
        <taxon>Pseudomonadota</taxon>
        <taxon>Alphaproteobacteria</taxon>
        <taxon>Hyphomicrobiales</taxon>
        <taxon>Bartonellaceae</taxon>
        <taxon>Bartonella</taxon>
    </lineage>
</organism>
<dbReference type="EC" id="2.8.1.8" evidence="1"/>
<dbReference type="EMBL" id="CP000524">
    <property type="protein sequence ID" value="ABM44617.1"/>
    <property type="molecule type" value="Genomic_DNA"/>
</dbReference>
<dbReference type="RefSeq" id="WP_005766672.1">
    <property type="nucleotide sequence ID" value="NC_008783.1"/>
</dbReference>
<dbReference type="SMR" id="A1USA0"/>
<dbReference type="STRING" id="360095.BARBAKC583_0538"/>
<dbReference type="GeneID" id="4685032"/>
<dbReference type="KEGG" id="bbk:BARBAKC583_0538"/>
<dbReference type="PATRIC" id="fig|360095.6.peg.522"/>
<dbReference type="eggNOG" id="COG0320">
    <property type="taxonomic scope" value="Bacteria"/>
</dbReference>
<dbReference type="HOGENOM" id="CLU_033144_2_1_5"/>
<dbReference type="OrthoDB" id="9787898at2"/>
<dbReference type="UniPathway" id="UPA00538">
    <property type="reaction ID" value="UER00593"/>
</dbReference>
<dbReference type="Proteomes" id="UP000000643">
    <property type="component" value="Chromosome"/>
</dbReference>
<dbReference type="GO" id="GO:0005737">
    <property type="term" value="C:cytoplasm"/>
    <property type="evidence" value="ECO:0007669"/>
    <property type="project" value="UniProtKB-SubCell"/>
</dbReference>
<dbReference type="GO" id="GO:0051539">
    <property type="term" value="F:4 iron, 4 sulfur cluster binding"/>
    <property type="evidence" value="ECO:0007669"/>
    <property type="project" value="UniProtKB-UniRule"/>
</dbReference>
<dbReference type="GO" id="GO:0016992">
    <property type="term" value="F:lipoate synthase activity"/>
    <property type="evidence" value="ECO:0007669"/>
    <property type="project" value="UniProtKB-UniRule"/>
</dbReference>
<dbReference type="GO" id="GO:0046872">
    <property type="term" value="F:metal ion binding"/>
    <property type="evidence" value="ECO:0007669"/>
    <property type="project" value="UniProtKB-KW"/>
</dbReference>
<dbReference type="CDD" id="cd01335">
    <property type="entry name" value="Radical_SAM"/>
    <property type="match status" value="1"/>
</dbReference>
<dbReference type="FunFam" id="3.20.20.70:FF:000040">
    <property type="entry name" value="Lipoyl synthase"/>
    <property type="match status" value="1"/>
</dbReference>
<dbReference type="Gene3D" id="3.20.20.70">
    <property type="entry name" value="Aldolase class I"/>
    <property type="match status" value="1"/>
</dbReference>
<dbReference type="HAMAP" id="MF_00206">
    <property type="entry name" value="Lipoyl_synth"/>
    <property type="match status" value="1"/>
</dbReference>
<dbReference type="InterPro" id="IPR013785">
    <property type="entry name" value="Aldolase_TIM"/>
</dbReference>
<dbReference type="InterPro" id="IPR006638">
    <property type="entry name" value="Elp3/MiaA/NifB-like_rSAM"/>
</dbReference>
<dbReference type="InterPro" id="IPR003698">
    <property type="entry name" value="Lipoyl_synth"/>
</dbReference>
<dbReference type="InterPro" id="IPR007197">
    <property type="entry name" value="rSAM"/>
</dbReference>
<dbReference type="NCBIfam" id="TIGR00510">
    <property type="entry name" value="lipA"/>
    <property type="match status" value="1"/>
</dbReference>
<dbReference type="NCBIfam" id="NF004019">
    <property type="entry name" value="PRK05481.1"/>
    <property type="match status" value="1"/>
</dbReference>
<dbReference type="NCBIfam" id="NF009544">
    <property type="entry name" value="PRK12928.1"/>
    <property type="match status" value="1"/>
</dbReference>
<dbReference type="PANTHER" id="PTHR10949">
    <property type="entry name" value="LIPOYL SYNTHASE"/>
    <property type="match status" value="1"/>
</dbReference>
<dbReference type="PANTHER" id="PTHR10949:SF0">
    <property type="entry name" value="LIPOYL SYNTHASE, MITOCHONDRIAL"/>
    <property type="match status" value="1"/>
</dbReference>
<dbReference type="Pfam" id="PF04055">
    <property type="entry name" value="Radical_SAM"/>
    <property type="match status" value="1"/>
</dbReference>
<dbReference type="PIRSF" id="PIRSF005963">
    <property type="entry name" value="Lipoyl_synth"/>
    <property type="match status" value="1"/>
</dbReference>
<dbReference type="SFLD" id="SFLDF00271">
    <property type="entry name" value="lipoyl_synthase"/>
    <property type="match status" value="1"/>
</dbReference>
<dbReference type="SFLD" id="SFLDS00029">
    <property type="entry name" value="Radical_SAM"/>
    <property type="match status" value="1"/>
</dbReference>
<dbReference type="SMART" id="SM00729">
    <property type="entry name" value="Elp3"/>
    <property type="match status" value="1"/>
</dbReference>
<dbReference type="SUPFAM" id="SSF102114">
    <property type="entry name" value="Radical SAM enzymes"/>
    <property type="match status" value="1"/>
</dbReference>
<dbReference type="PROSITE" id="PS51918">
    <property type="entry name" value="RADICAL_SAM"/>
    <property type="match status" value="1"/>
</dbReference>
<name>LIPA_BARBK</name>
<evidence type="ECO:0000255" key="1">
    <source>
        <dbReference type="HAMAP-Rule" id="MF_00206"/>
    </source>
</evidence>
<evidence type="ECO:0000255" key="2">
    <source>
        <dbReference type="PROSITE-ProRule" id="PRU01266"/>
    </source>
</evidence>
<accession>A1USA0</accession>
<gene>
    <name evidence="1" type="primary">lipA</name>
    <name type="ordered locus">BARBAKC583_0538</name>
</gene>
<keyword id="KW-0004">4Fe-4S</keyword>
<keyword id="KW-0963">Cytoplasm</keyword>
<keyword id="KW-0408">Iron</keyword>
<keyword id="KW-0411">Iron-sulfur</keyword>
<keyword id="KW-0479">Metal-binding</keyword>
<keyword id="KW-0949">S-adenosyl-L-methionine</keyword>
<keyword id="KW-0808">Transferase</keyword>